<feature type="chain" id="PRO_0000209990" description="UPF0337 protein BPP3185">
    <location>
        <begin position="1"/>
        <end position="66"/>
    </location>
</feature>
<comment type="similarity">
    <text evidence="1">Belongs to the UPF0337 (CsbD) family.</text>
</comment>
<evidence type="ECO:0000305" key="1"/>
<dbReference type="EMBL" id="BX640432">
    <property type="protein sequence ID" value="CAE38470.1"/>
    <property type="molecule type" value="Genomic_DNA"/>
</dbReference>
<dbReference type="RefSeq" id="WP_003813568.1">
    <property type="nucleotide sequence ID" value="NC_002928.3"/>
</dbReference>
<dbReference type="SMR" id="Q7W5V2"/>
<dbReference type="KEGG" id="bpa:BPP3185"/>
<dbReference type="HOGENOM" id="CLU_135567_4_3_4"/>
<dbReference type="Proteomes" id="UP000001421">
    <property type="component" value="Chromosome"/>
</dbReference>
<dbReference type="Gene3D" id="1.10.1470.10">
    <property type="entry name" value="YjbJ"/>
    <property type="match status" value="1"/>
</dbReference>
<dbReference type="InterPro" id="IPR008462">
    <property type="entry name" value="CsbD"/>
</dbReference>
<dbReference type="InterPro" id="IPR050423">
    <property type="entry name" value="UPF0337_stress_rsp"/>
</dbReference>
<dbReference type="InterPro" id="IPR026042">
    <property type="entry name" value="YjbJ"/>
</dbReference>
<dbReference type="InterPro" id="IPR036629">
    <property type="entry name" value="YjbJ_sf"/>
</dbReference>
<dbReference type="PANTHER" id="PTHR34977">
    <property type="entry name" value="UPF0337 PROTEIN YJBJ"/>
    <property type="match status" value="1"/>
</dbReference>
<dbReference type="PANTHER" id="PTHR34977:SF1">
    <property type="entry name" value="UPF0337 PROTEIN YJBJ"/>
    <property type="match status" value="1"/>
</dbReference>
<dbReference type="Pfam" id="PF05532">
    <property type="entry name" value="CsbD"/>
    <property type="match status" value="1"/>
</dbReference>
<dbReference type="PIRSF" id="PIRSF039008">
    <property type="entry name" value="YjbJ"/>
    <property type="match status" value="1"/>
</dbReference>
<dbReference type="SUPFAM" id="SSF69047">
    <property type="entry name" value="Hypothetical protein YjbJ"/>
    <property type="match status" value="1"/>
</dbReference>
<name>Y3185_BORPA</name>
<sequence>MNNDIVAGKWKQLTGKAKAAWGELTDDELTRTEGNAERLAGLIQERYGKTKEQAQREVREFFDRNP</sequence>
<proteinExistence type="inferred from homology"/>
<gene>
    <name type="ordered locus">BPP3185</name>
</gene>
<accession>Q7W5V2</accession>
<organism>
    <name type="scientific">Bordetella parapertussis (strain 12822 / ATCC BAA-587 / NCTC 13253)</name>
    <dbReference type="NCBI Taxonomy" id="257311"/>
    <lineage>
        <taxon>Bacteria</taxon>
        <taxon>Pseudomonadati</taxon>
        <taxon>Pseudomonadota</taxon>
        <taxon>Betaproteobacteria</taxon>
        <taxon>Burkholderiales</taxon>
        <taxon>Alcaligenaceae</taxon>
        <taxon>Bordetella</taxon>
    </lineage>
</organism>
<protein>
    <recommendedName>
        <fullName>UPF0337 protein BPP3185</fullName>
    </recommendedName>
</protein>
<reference key="1">
    <citation type="journal article" date="2003" name="Nat. Genet.">
        <title>Comparative analysis of the genome sequences of Bordetella pertussis, Bordetella parapertussis and Bordetella bronchiseptica.</title>
        <authorList>
            <person name="Parkhill J."/>
            <person name="Sebaihia M."/>
            <person name="Preston A."/>
            <person name="Murphy L.D."/>
            <person name="Thomson N.R."/>
            <person name="Harris D.E."/>
            <person name="Holden M.T.G."/>
            <person name="Churcher C.M."/>
            <person name="Bentley S.D."/>
            <person name="Mungall K.L."/>
            <person name="Cerdeno-Tarraga A.-M."/>
            <person name="Temple L."/>
            <person name="James K.D."/>
            <person name="Harris B."/>
            <person name="Quail M.A."/>
            <person name="Achtman M."/>
            <person name="Atkin R."/>
            <person name="Baker S."/>
            <person name="Basham D."/>
            <person name="Bason N."/>
            <person name="Cherevach I."/>
            <person name="Chillingworth T."/>
            <person name="Collins M."/>
            <person name="Cronin A."/>
            <person name="Davis P."/>
            <person name="Doggett J."/>
            <person name="Feltwell T."/>
            <person name="Goble A."/>
            <person name="Hamlin N."/>
            <person name="Hauser H."/>
            <person name="Holroyd S."/>
            <person name="Jagels K."/>
            <person name="Leather S."/>
            <person name="Moule S."/>
            <person name="Norberczak H."/>
            <person name="O'Neil S."/>
            <person name="Ormond D."/>
            <person name="Price C."/>
            <person name="Rabbinowitsch E."/>
            <person name="Rutter S."/>
            <person name="Sanders M."/>
            <person name="Saunders D."/>
            <person name="Seeger K."/>
            <person name="Sharp S."/>
            <person name="Simmonds M."/>
            <person name="Skelton J."/>
            <person name="Squares R."/>
            <person name="Squares S."/>
            <person name="Stevens K."/>
            <person name="Unwin L."/>
            <person name="Whitehead S."/>
            <person name="Barrell B.G."/>
            <person name="Maskell D.J."/>
        </authorList>
    </citation>
    <scope>NUCLEOTIDE SEQUENCE [LARGE SCALE GENOMIC DNA]</scope>
    <source>
        <strain>12822 / ATCC BAA-587 / NCTC 13253</strain>
    </source>
</reference>